<name>GCH4_RALN1</name>
<reference key="1">
    <citation type="journal article" date="2002" name="Nature">
        <title>Genome sequence of the plant pathogen Ralstonia solanacearum.</title>
        <authorList>
            <person name="Salanoubat M."/>
            <person name="Genin S."/>
            <person name="Artiguenave F."/>
            <person name="Gouzy J."/>
            <person name="Mangenot S."/>
            <person name="Arlat M."/>
            <person name="Billault A."/>
            <person name="Brottier P."/>
            <person name="Camus J.-C."/>
            <person name="Cattolico L."/>
            <person name="Chandler M."/>
            <person name="Choisne N."/>
            <person name="Claudel-Renard C."/>
            <person name="Cunnac S."/>
            <person name="Demange N."/>
            <person name="Gaspin C."/>
            <person name="Lavie M."/>
            <person name="Moisan A."/>
            <person name="Robert C."/>
            <person name="Saurin W."/>
            <person name="Schiex T."/>
            <person name="Siguier P."/>
            <person name="Thebault P."/>
            <person name="Whalen M."/>
            <person name="Wincker P."/>
            <person name="Levy M."/>
            <person name="Weissenbach J."/>
            <person name="Boucher C.A."/>
        </authorList>
    </citation>
    <scope>NUCLEOTIDE SEQUENCE [LARGE SCALE GENOMIC DNA]</scope>
    <source>
        <strain>ATCC BAA-1114 / GMI1000</strain>
    </source>
</reference>
<proteinExistence type="inferred from homology"/>
<keyword id="KW-0378">Hydrolase</keyword>
<keyword id="KW-1185">Reference proteome</keyword>
<comment type="function">
    <text evidence="1">Converts GTP to 7,8-dihydroneopterin triphosphate.</text>
</comment>
<comment type="catalytic activity">
    <reaction evidence="1">
        <text>GTP + H2O = 7,8-dihydroneopterin 3'-triphosphate + formate + H(+)</text>
        <dbReference type="Rhea" id="RHEA:17473"/>
        <dbReference type="ChEBI" id="CHEBI:15377"/>
        <dbReference type="ChEBI" id="CHEBI:15378"/>
        <dbReference type="ChEBI" id="CHEBI:15740"/>
        <dbReference type="ChEBI" id="CHEBI:37565"/>
        <dbReference type="ChEBI" id="CHEBI:58462"/>
        <dbReference type="EC" id="3.5.4.16"/>
    </reaction>
</comment>
<comment type="pathway">
    <text evidence="1">Cofactor biosynthesis; 7,8-dihydroneopterin triphosphate biosynthesis; 7,8-dihydroneopterin triphosphate from GTP: step 1/1.</text>
</comment>
<comment type="similarity">
    <text evidence="1">Belongs to the GTP cyclohydrolase IV family.</text>
</comment>
<gene>
    <name evidence="1" type="primary">folE2</name>
    <name type="ordered locus">RSc2220</name>
    <name type="ORF">RS01379</name>
</gene>
<organism>
    <name type="scientific">Ralstonia nicotianae (strain ATCC BAA-1114 / GMI1000)</name>
    <name type="common">Ralstonia solanacearum</name>
    <dbReference type="NCBI Taxonomy" id="267608"/>
    <lineage>
        <taxon>Bacteria</taxon>
        <taxon>Pseudomonadati</taxon>
        <taxon>Pseudomonadota</taxon>
        <taxon>Betaproteobacteria</taxon>
        <taxon>Burkholderiales</taxon>
        <taxon>Burkholderiaceae</taxon>
        <taxon>Ralstonia</taxon>
        <taxon>Ralstonia solanacearum species complex</taxon>
    </lineage>
</organism>
<accession>Q8XX96</accession>
<feature type="chain" id="PRO_0000147722" description="GTP cyclohydrolase FolE2">
    <location>
        <begin position="1"/>
        <end position="268"/>
    </location>
</feature>
<feature type="site" description="May be catalytically important" evidence="1">
    <location>
        <position position="153"/>
    </location>
</feature>
<protein>
    <recommendedName>
        <fullName evidence="1">GTP cyclohydrolase FolE2</fullName>
        <ecNumber evidence="1">3.5.4.16</ecNumber>
    </recommendedName>
</protein>
<evidence type="ECO:0000255" key="1">
    <source>
        <dbReference type="HAMAP-Rule" id="MF_01527"/>
    </source>
</evidence>
<sequence>MNDMNPGFVMPDVQSSHDTRQIPIQRVGVRGVRYPMSLQTPSGVLSTVGTFNLDVHLPADQKGTHMSRFVALLEEEREPLNLAQFQLLLEKMLEKLEADAGRIEVSFPYFVSKTAPVSGVQSLMDYEVTMIGEVRDGHTTVRVKALVPVTSLCPCSKKISQYGAHNQRSHITIDAELAADTPVEALIRMAEEEASCELWGLLKRPDEKFVTERAYENPKFVEDLVRDIAMRLNEDDRIVAYTLEAENFESIHNHSAYALIERDKRRAG</sequence>
<dbReference type="EC" id="3.5.4.16" evidence="1"/>
<dbReference type="EMBL" id="AL646052">
    <property type="protein sequence ID" value="CAD15927.1"/>
    <property type="molecule type" value="Genomic_DNA"/>
</dbReference>
<dbReference type="RefSeq" id="WP_011002148.1">
    <property type="nucleotide sequence ID" value="NC_003295.1"/>
</dbReference>
<dbReference type="SMR" id="Q8XX96"/>
<dbReference type="STRING" id="267608.RSc2220"/>
<dbReference type="EnsemblBacteria" id="CAD15927">
    <property type="protein sequence ID" value="CAD15927"/>
    <property type="gene ID" value="RSc2220"/>
</dbReference>
<dbReference type="GeneID" id="93853279"/>
<dbReference type="KEGG" id="rso:RSc2220"/>
<dbReference type="eggNOG" id="COG1469">
    <property type="taxonomic scope" value="Bacteria"/>
</dbReference>
<dbReference type="HOGENOM" id="CLU_062816_1_1_4"/>
<dbReference type="UniPathway" id="UPA00848">
    <property type="reaction ID" value="UER00151"/>
</dbReference>
<dbReference type="Proteomes" id="UP000001436">
    <property type="component" value="Chromosome"/>
</dbReference>
<dbReference type="GO" id="GO:0003934">
    <property type="term" value="F:GTP cyclohydrolase I activity"/>
    <property type="evidence" value="ECO:0007669"/>
    <property type="project" value="UniProtKB-UniRule"/>
</dbReference>
<dbReference type="GO" id="GO:0046654">
    <property type="term" value="P:tetrahydrofolate biosynthetic process"/>
    <property type="evidence" value="ECO:0007669"/>
    <property type="project" value="UniProtKB-UniRule"/>
</dbReference>
<dbReference type="Gene3D" id="3.10.270.10">
    <property type="entry name" value="Urate Oxidase"/>
    <property type="match status" value="1"/>
</dbReference>
<dbReference type="HAMAP" id="MF_01527_B">
    <property type="entry name" value="GTP_cyclohydrol_B"/>
    <property type="match status" value="1"/>
</dbReference>
<dbReference type="InterPro" id="IPR022838">
    <property type="entry name" value="GTP_cyclohydrolase_FolE2"/>
</dbReference>
<dbReference type="InterPro" id="IPR003801">
    <property type="entry name" value="GTP_cyclohydrolase_FolE2/MptA"/>
</dbReference>
<dbReference type="NCBIfam" id="NF010200">
    <property type="entry name" value="PRK13674.1-1"/>
    <property type="match status" value="1"/>
</dbReference>
<dbReference type="PANTHER" id="PTHR36445">
    <property type="entry name" value="GTP CYCLOHYDROLASE MPTA"/>
    <property type="match status" value="1"/>
</dbReference>
<dbReference type="PANTHER" id="PTHR36445:SF1">
    <property type="entry name" value="GTP CYCLOHYDROLASE MPTA"/>
    <property type="match status" value="1"/>
</dbReference>
<dbReference type="Pfam" id="PF02649">
    <property type="entry name" value="GCHY-1"/>
    <property type="match status" value="1"/>
</dbReference>